<reference key="1">
    <citation type="submission" date="2005-03" db="EMBL/GenBank/DDBJ databases">
        <title>Virological characterization of cases of transplantation-associated Rabies in Germany.</title>
        <authorList>
            <person name="Pfefferle S."/>
            <person name="Panning M."/>
            <person name="Drosten C."/>
        </authorList>
    </citation>
    <scope>NUCLEOTIDE SEQUENCE [GENOMIC RNA]</scope>
    <source>
        <strain>Isolate Germany</strain>
    </source>
</reference>
<reference key="2">
    <citation type="submission" date="2007-02" db="EMBL/GenBank/DDBJ databases">
        <title>Complete nucleotide sequencing of an Indian isolate of Rabies virus.</title>
        <authorList>
            <person name="Desai A."/>
            <person name="Nagaraja T."/>
            <person name="Muhamuda K."/>
            <person name="Madhusudana S."/>
            <person name="Ravi V."/>
        </authorList>
    </citation>
    <scope>NUCLEOTIDE SEQUENCE [GENOMIC RNA]</scope>
</reference>
<gene>
    <name type="primary">L</name>
</gene>
<evidence type="ECO:0000250" key="1"/>
<evidence type="ECO:0000250" key="2">
    <source>
        <dbReference type="UniProtKB" id="P03523"/>
    </source>
</evidence>
<evidence type="ECO:0000250" key="3">
    <source>
        <dbReference type="UniProtKB" id="P28887"/>
    </source>
</evidence>
<evidence type="ECO:0000255" key="4">
    <source>
        <dbReference type="PROSITE-ProRule" id="PRU00539"/>
    </source>
</evidence>
<evidence type="ECO:0000255" key="5">
    <source>
        <dbReference type="PROSITE-ProRule" id="PRU00923"/>
    </source>
</evidence>
<evidence type="ECO:0000256" key="6">
    <source>
        <dbReference type="SAM" id="MobiDB-lite"/>
    </source>
</evidence>
<evidence type="ECO:0000305" key="7"/>
<protein>
    <recommendedName>
        <fullName>Large structural protein</fullName>
        <shortName>Protein L</shortName>
    </recommendedName>
    <alternativeName>
        <fullName>Replicase</fullName>
    </alternativeName>
    <alternativeName>
        <fullName>Transcriptase</fullName>
    </alternativeName>
    <domain>
        <recommendedName>
            <fullName>RNA-directed RNA polymerase</fullName>
            <ecNumber evidence="3">2.7.7.48</ecNumber>
        </recommendedName>
    </domain>
    <domain>
        <recommendedName>
            <fullName evidence="2">GTP phosphohydrolase</fullName>
            <ecNumber evidence="2">3.6.1.-</ecNumber>
        </recommendedName>
    </domain>
    <domain>
        <recommendedName>
            <fullName evidence="7">GDP polyribonucleotidyltransferase</fullName>
            <ecNumber evidence="2">2.7.7.88</ecNumber>
        </recommendedName>
        <alternativeName>
            <fullName evidence="7">PRNTase</fullName>
        </alternativeName>
    </domain>
    <domain>
        <recommendedName>
            <fullName evidence="7">mRNA cap methyltransferase</fullName>
            <ecNumber evidence="2">2.1.1.375</ecNumber>
        </recommendedName>
        <alternativeName>
            <fullName evidence="2">mRNA (guanine-N(7)-)-methyltransferase</fullName>
            <shortName evidence="2">G-N7-MTase</shortName>
        </alternativeName>
        <alternativeName>
            <fullName evidence="2">mRNA (nucleoside-2'-O-)-methyltransferase</fullName>
            <shortName evidence="2">N1-2'-O-MTase</shortName>
        </alternativeName>
    </domain>
</protein>
<keyword id="KW-0067">ATP-binding</keyword>
<keyword id="KW-1035">Host cytoplasm</keyword>
<keyword id="KW-0378">Hydrolase</keyword>
<keyword id="KW-0489">Methyltransferase</keyword>
<keyword id="KW-0506">mRNA capping</keyword>
<keyword id="KW-0507">mRNA processing</keyword>
<keyword id="KW-0511">Multifunctional enzyme</keyword>
<keyword id="KW-0547">Nucleotide-binding</keyword>
<keyword id="KW-0548">Nucleotidyltransferase</keyword>
<keyword id="KW-0696">RNA-directed RNA polymerase</keyword>
<keyword id="KW-0949">S-adenosyl-L-methionine</keyword>
<keyword id="KW-0808">Transferase</keyword>
<keyword id="KW-0693">Viral RNA replication</keyword>
<keyword id="KW-0946">Virion</keyword>
<comment type="function">
    <text evidence="2">RNA-directed RNA polymerase that catalyzes the transcription of viral mRNAs, their capping and polyadenylation. The template is composed of the viral RNA tightly encapsidated by the nucleoprotein (N). The viral polymerase binds to the genomic RNA at the 3' leader promoter, and transcribes subsequently all viral mRNAs with a decreasing efficiency. The first gene is the most transcribed, and the last the least transcribed. The viral phosphoprotein acts as a processivity factor. Capping is concomitant with initiation of mRNA transcription. Indeed, a GDP polyribonucleotidyl transferase (PRNTase) adds the cap structure when the nascent RNA chain length has reached few nucleotides. Ribose 2'-O methylation of viral mRNA cap precedes and facilitates subsequent guanine-N-7 methylation, both activities being carried by the viral polymerase. Polyadenylation of mRNAs occur by a stuttering mechanism at a slipery stop site present at the end viral genes. After finishing transcription of a mRNA, the polymerase can resume transcription of the downstream gene.</text>
</comment>
<comment type="function">
    <text evidence="2">RNA-directed RNA polymerase that catalyzes the replication of viral genomic RNA. The template is composed of the viral RNA tightly encapsidated by the nucleoprotein (N). The replicase mode is dependent on intracellular N protein concentration. In this mode, the polymerase replicates the whole viral genome without recognizing transcriptional signals, and the replicated genome is not caped or polyadenylated.</text>
</comment>
<comment type="catalytic activity">
    <reaction evidence="4">
        <text>RNA(n) + a ribonucleoside 5'-triphosphate = RNA(n+1) + diphosphate</text>
        <dbReference type="Rhea" id="RHEA:21248"/>
        <dbReference type="Rhea" id="RHEA-COMP:14527"/>
        <dbReference type="Rhea" id="RHEA-COMP:17342"/>
        <dbReference type="ChEBI" id="CHEBI:33019"/>
        <dbReference type="ChEBI" id="CHEBI:61557"/>
        <dbReference type="ChEBI" id="CHEBI:140395"/>
        <dbReference type="EC" id="2.7.7.48"/>
    </reaction>
</comment>
<comment type="catalytic activity">
    <reaction evidence="2">
        <text>a 5'-end (5'-triphosphoguanosine)-adenylyl-adenylyl-cytidylyl-adenosine in mRNA + 2 S-adenosyl-L-methionine = a 5'-end (N(7)-methyl 5'-triphosphoguanosine)-(2'-O-methyladenylyl)-adenylyl-cytidylyl-adenosine in mRNA + 2 S-adenosyl-L-homocysteine + H(+)</text>
        <dbReference type="Rhea" id="RHEA:65376"/>
        <dbReference type="Rhea" id="RHEA-COMP:16797"/>
        <dbReference type="Rhea" id="RHEA-COMP:16798"/>
        <dbReference type="ChEBI" id="CHEBI:15378"/>
        <dbReference type="ChEBI" id="CHEBI:57856"/>
        <dbReference type="ChEBI" id="CHEBI:59789"/>
        <dbReference type="ChEBI" id="CHEBI:156483"/>
        <dbReference type="ChEBI" id="CHEBI:156484"/>
        <dbReference type="EC" id="2.1.1.375"/>
    </reaction>
</comment>
<comment type="catalytic activity">
    <reaction evidence="2">
        <text>a 5'-end (5'-triphosphoguanosine)-adenylyl-adenylyl-cytidylyl-adenosine in mRNA + S-adenosyl-L-methionine = a 5'-end (5'-triphosphoguanosine)-(2'-O-methyladenylyl)-adenylyl-cytidylyl-adenosine in mRNA + S-adenosyl-L-homocysteine + H(+)</text>
        <dbReference type="Rhea" id="RHEA:65380"/>
        <dbReference type="Rhea" id="RHEA-COMP:16797"/>
        <dbReference type="Rhea" id="RHEA-COMP:16801"/>
        <dbReference type="ChEBI" id="CHEBI:15378"/>
        <dbReference type="ChEBI" id="CHEBI:57856"/>
        <dbReference type="ChEBI" id="CHEBI:59789"/>
        <dbReference type="ChEBI" id="CHEBI:156482"/>
        <dbReference type="ChEBI" id="CHEBI:156484"/>
    </reaction>
</comment>
<comment type="catalytic activity">
    <reaction evidence="3">
        <text>a 5'-end triphospho-adenylyl-adenylyl-cytidylyl-adenosine in mRNA + GDP + H(+) = a 5'-end (5'-triphosphoguanosine)-adenylyl-adenylyl-cytidylyl-adenosine in mRNA + diphosphate</text>
        <dbReference type="Rhea" id="RHEA:65436"/>
        <dbReference type="Rhea" id="RHEA-COMP:16797"/>
        <dbReference type="Rhea" id="RHEA-COMP:16799"/>
        <dbReference type="ChEBI" id="CHEBI:15378"/>
        <dbReference type="ChEBI" id="CHEBI:33019"/>
        <dbReference type="ChEBI" id="CHEBI:58189"/>
        <dbReference type="ChEBI" id="CHEBI:156484"/>
        <dbReference type="ChEBI" id="CHEBI:156503"/>
        <dbReference type="EC" id="2.7.7.88"/>
    </reaction>
</comment>
<comment type="catalytic activity">
    <reaction evidence="2">
        <text>a 5'-end (5'-triphosphoguanosine)-(2'-O-methyladenylyl)-adenylyl-cytidylyl-adenosine in mRNA + S-adenosyl-L-methionine = a 5'-end (N(7)-methyl 5'-triphosphoguanosine)-(2'-O-methyladenylyl)-adenylyl-cytidylyl-adenosine in mRNA + S-adenosyl-L-homocysteine</text>
        <dbReference type="Rhea" id="RHEA:65440"/>
        <dbReference type="Rhea" id="RHEA-COMP:16798"/>
        <dbReference type="Rhea" id="RHEA-COMP:16801"/>
        <dbReference type="ChEBI" id="CHEBI:57856"/>
        <dbReference type="ChEBI" id="CHEBI:59789"/>
        <dbReference type="ChEBI" id="CHEBI:156482"/>
        <dbReference type="ChEBI" id="CHEBI:156483"/>
    </reaction>
</comment>
<comment type="catalytic activity">
    <reaction evidence="3">
        <text>GTP + H2O = GDP + phosphate + H(+)</text>
        <dbReference type="Rhea" id="RHEA:19669"/>
        <dbReference type="ChEBI" id="CHEBI:15377"/>
        <dbReference type="ChEBI" id="CHEBI:15378"/>
        <dbReference type="ChEBI" id="CHEBI:37565"/>
        <dbReference type="ChEBI" id="CHEBI:43474"/>
        <dbReference type="ChEBI" id="CHEBI:58189"/>
    </reaction>
</comment>
<comment type="subunit">
    <text evidence="2">May form homodimer. Interacts with the P protein.</text>
</comment>
<comment type="subcellular location">
    <subcellularLocation>
        <location evidence="2">Virion</location>
    </subcellularLocation>
    <subcellularLocation>
        <location evidence="2">Host cytoplasm</location>
    </subcellularLocation>
    <text evidence="2">L and P are packaged asymmetrically towards the blunt end of the virus.</text>
</comment>
<comment type="similarity">
    <text evidence="7">Belongs to the rhabdoviruses protein L family.</text>
</comment>
<organism>
    <name type="scientific">Rabies virus (strain India)</name>
    <name type="common">RABV</name>
    <dbReference type="NCBI Taxonomy" id="445790"/>
    <lineage>
        <taxon>Viruses</taxon>
        <taxon>Riboviria</taxon>
        <taxon>Orthornavirae</taxon>
        <taxon>Negarnaviricota</taxon>
        <taxon>Haploviricotina</taxon>
        <taxon>Monjiviricetes</taxon>
        <taxon>Mononegavirales</taxon>
        <taxon>Rhabdoviridae</taxon>
        <taxon>Alpharhabdovirinae</taxon>
        <taxon>Lyssavirus</taxon>
        <taxon>Lyssavirus rabies</taxon>
    </lineage>
</organism>
<dbReference type="EC" id="2.7.7.48" evidence="3"/>
<dbReference type="EC" id="3.6.1.-" evidence="2"/>
<dbReference type="EC" id="2.7.7.88" evidence="2"/>
<dbReference type="EC" id="2.1.1.375" evidence="2"/>
<dbReference type="EMBL" id="AY956319">
    <property type="protein sequence ID" value="AAX56085.1"/>
    <property type="molecule type" value="Genomic_RNA"/>
</dbReference>
<dbReference type="EMBL" id="EF437215">
    <property type="protein sequence ID" value="ABO15580.1"/>
    <property type="molecule type" value="Genomic_RNA"/>
</dbReference>
<dbReference type="SMR" id="A3RM23"/>
<dbReference type="Proteomes" id="UP000008620">
    <property type="component" value="Genome"/>
</dbReference>
<dbReference type="Proteomes" id="UP000008996">
    <property type="component" value="Genome"/>
</dbReference>
<dbReference type="GO" id="GO:0030430">
    <property type="term" value="C:host cell cytoplasm"/>
    <property type="evidence" value="ECO:0007669"/>
    <property type="project" value="UniProtKB-SubCell"/>
</dbReference>
<dbReference type="GO" id="GO:0044423">
    <property type="term" value="C:virion component"/>
    <property type="evidence" value="ECO:0007669"/>
    <property type="project" value="UniProtKB-KW"/>
</dbReference>
<dbReference type="GO" id="GO:0005524">
    <property type="term" value="F:ATP binding"/>
    <property type="evidence" value="ECO:0007669"/>
    <property type="project" value="UniProtKB-KW"/>
</dbReference>
<dbReference type="GO" id="GO:0003924">
    <property type="term" value="F:GTPase activity"/>
    <property type="evidence" value="ECO:0007669"/>
    <property type="project" value="RHEA"/>
</dbReference>
<dbReference type="GO" id="GO:0004482">
    <property type="term" value="F:mRNA 5'-cap (guanine-N7-)-methyltransferase activity"/>
    <property type="evidence" value="ECO:0007669"/>
    <property type="project" value="InterPro"/>
</dbReference>
<dbReference type="GO" id="GO:0003968">
    <property type="term" value="F:RNA-directed RNA polymerase activity"/>
    <property type="evidence" value="ECO:0007669"/>
    <property type="project" value="UniProtKB-KW"/>
</dbReference>
<dbReference type="GO" id="GO:0039689">
    <property type="term" value="P:negative stranded viral RNA replication"/>
    <property type="evidence" value="ECO:0000250"/>
    <property type="project" value="UniProtKB"/>
</dbReference>
<dbReference type="InterPro" id="IPR039530">
    <property type="entry name" value="L_methyltransferase_rhabdo"/>
</dbReference>
<dbReference type="InterPro" id="IPR039736">
    <property type="entry name" value="L_poly_C"/>
</dbReference>
<dbReference type="InterPro" id="IPR048398">
    <property type="entry name" value="Methyltrans_Mon_C"/>
</dbReference>
<dbReference type="InterPro" id="IPR048397">
    <property type="entry name" value="Methyltrans_Mon_CD"/>
</dbReference>
<dbReference type="InterPro" id="IPR026890">
    <property type="entry name" value="Mononeg_mRNAcap"/>
</dbReference>
<dbReference type="InterPro" id="IPR014023">
    <property type="entry name" value="Mononeg_RNA_pol_cat"/>
</dbReference>
<dbReference type="InterPro" id="IPR025786">
    <property type="entry name" value="Mononega_L_MeTrfase"/>
</dbReference>
<dbReference type="InterPro" id="IPR017234">
    <property type="entry name" value="RNA-dir_pol_rhabdovirus"/>
</dbReference>
<dbReference type="NCBIfam" id="TIGR04198">
    <property type="entry name" value="paramyx_RNAcap"/>
    <property type="match status" value="1"/>
</dbReference>
<dbReference type="Pfam" id="PF21080">
    <property type="entry name" value="Methyltrans_Mon_1st"/>
    <property type="match status" value="1"/>
</dbReference>
<dbReference type="Pfam" id="PF14314">
    <property type="entry name" value="Methyltrans_Mon_2nd"/>
    <property type="match status" value="1"/>
</dbReference>
<dbReference type="Pfam" id="PF21081">
    <property type="entry name" value="Methyltrans_Mon_3rd"/>
    <property type="match status" value="1"/>
</dbReference>
<dbReference type="Pfam" id="PF14318">
    <property type="entry name" value="Mononeg_mRNAcap"/>
    <property type="match status" value="1"/>
</dbReference>
<dbReference type="Pfam" id="PF00946">
    <property type="entry name" value="Mononeg_RNA_pol"/>
    <property type="match status" value="1"/>
</dbReference>
<dbReference type="PIRSF" id="PIRSF037546">
    <property type="entry name" value="RNA_pol_RhabdoV_sub"/>
    <property type="match status" value="1"/>
</dbReference>
<dbReference type="PROSITE" id="PS50526">
    <property type="entry name" value="RDRP_SSRNA_NEG_NONSEG"/>
    <property type="match status" value="1"/>
</dbReference>
<dbReference type="PROSITE" id="PS51590">
    <property type="entry name" value="SAM_MT_MNV_L"/>
    <property type="match status" value="1"/>
</dbReference>
<sequence length="2127" mass="242770">MLDPGEVYDDPVDPIESDAEPRGAPTVPNILRNSDYNLNSPLIEDPARLMLEWLTTGNRPYRMTLTDNCSRSYKVLKDYFKKVDLGSLKVGGTAAQSMISLWLYGAHSESNRSRKCITELAHFYSKSSPIEKLLNCTLGNRGLRIPPEGVLSCLERVDYDKAFGRYLANTYSSYLFFHVITLYMNALDWDEEKTILALWKELTSVDIGKDLVKFKDQIWGLLIVTKDFVYSHSSNCLFDRNYTLMLKDLFLSRFNSLMILLSPPEPRYSDDLISQLCQLYIAGDQVLSMCGNSGYEVIKILEPYVVNSLVQRAERFRPLIHSLGDFPVFIKDKVSQLEGTFGPSAKRFFGVLDQFDNIHDLVFVYGCYRHWGHPYIDYRKGLSKLYDQVHIKKVIDKSYQECLASDLARRILRWGFDKYSKWYLDSRLLTRDHPLTPYIKTQTWPPKHIVDLVGDTWHKLPITQIFEIPEPMDPSEILDDKSHSFTRARLASWLSENRGGPAPSEKVIITALSKPPVNPREFLKTIDLGGLPDEDLIIGLKPKERELKIEGRFFALMSWNLRLYFVITEKLLANYILPLFDALTMTDNLNKVFKKLIDRVTGQGLLDYSRVTYAFHLDYEKWNNHQRLESTEDVFSVLDHVFGLKRVFSRTHEFFQKSWIYYSDRSDLIGLWEDQIYCLDMSNGPTCWNGQDGGLEGLRQKGWSLVSLLMIDRESQTRNTRTKILAQGDNQVLCPTYMLSPGLSREGLLYELESISRNALSIYRAIEEGASKLGLIIKKEETMCSYDFLIYGKTPLFRGNILVPESKRWARVSCISNDQIVNLANIMSTVSTNALTVAQHSQSLIKPMRDFLLMSVQAVFHYLLFSPILKGRVYKILSAEGESFLLAMSRIIYLDPSLGGVSGMSLGRFHIRQFSDPVSEGLSFWREIWLSSHESWIHALCQEAGNPDLGERTLESFTRLLEDPTTLNIKGGASPTILLKDAIRKALYDEVDKVENSEFREAILLSKTHRDNFILFLKSVEPLFPRFLSELFSSSFLGIPESIIGLIQNSRTIRRQFRRSLSRTLEESFYNSEIHGINRMTQTPQRVGRVWPCSSERADLLREISWGRKVVGTTVPHPSEMLGLLPKSSISCPCGATGGGNPRVSVSVLPSFDQSFFSRGPLKGYLGSSTSMSTQLFHAWEKVTNVHVVKRALSLKESINWFITRNSNLAQTLIRNIMSLTGPDFPLEEAPVFKRTGSALHRFKSARYSEGGYSSVCPNLLSHISVSTDTMSDLTQDGKNYDFMFQPLMLYAQTWTSELVQKDTRLRDSTFHWHLRCNRCVRPIDDITLETSQIFEFPDVSKRISRMVSGAVPHFQKLPDIRLKPGDFESLSGREKSRHIGSAQGLLYSILVAIHDSGYNDGTIFPVNIYGKVSPRDYLRGLARGVLIGSSICFLTRMTNININRPLELISGVISYILLRLDNHPSLYIMLREPSLRGEIFSIPQKIPAAYPTTMKEGNRSILCYLQHVLRYEREVITASPENDWLWIFSDFRSAKMTYLTLITYQSHLLLQRVERNLSKSMRANLRQMSSLMRQVLGGHGEDTLESDDDVQRLLKDSLRRTRWVDQEVRHAARTMTGDYSPNKKLSRKAGGSEWVCSAQQVAVSTSANPAPVLELDIRALSKRFQNPLISGLRVVQWATGAHYKLKPILDDLNVFPSLCLVVGDGSGGISRAVLNMFPDAKLVFNSLLEVNDLMASGTHPLPPSAIMSGGDDIVSRVIDFDSIWEKPSDLRNLTTWKYFQSVQKQVNMSYDLIICDAEVTDIASINRITLLMSDFALSIDGPLYLVFKTYGTMLVNPDYKAIQHLSRAFPSVTGFITQVTSSFSSELYLRFSKRGKFFRDAEYLTSSTLREMSLVLFNCSSPRSEMQRARSLNYQDLVRGFPEEIISNPYNEMIITLIDSDVESFLVHKMVDDLELQRRTLSKVAIIIAIMIVFSNRVFNVSKPLTDPLFYPPSDPKILRHFNICCSTMMYLSTALGDVPSFARLHDLYNRPITYYFRKQVIRGNIYLSWSWSDDTAVFKRVACNSSLSLSSHWIRLIYKIVKTTRLVGSIEDLSGEIERHLRGYNRWITLEDIRCRSSLLDYSCL</sequence>
<accession>A3RM23</accession>
<accession>Q58FH0</accession>
<organismHost>
    <name type="scientific">Homo sapiens</name>
    <name type="common">Human</name>
    <dbReference type="NCBI Taxonomy" id="9606"/>
</organismHost>
<organismHost>
    <name type="scientific">Mammalia</name>
    <dbReference type="NCBI Taxonomy" id="40674"/>
</organismHost>
<proteinExistence type="inferred from homology"/>
<feature type="chain" id="PRO_0000294422" description="Large structural protein">
    <location>
        <begin position="1"/>
        <end position="2127"/>
    </location>
</feature>
<feature type="domain" description="RdRp catalytic" evidence="4">
    <location>
        <begin position="611"/>
        <end position="799"/>
    </location>
</feature>
<feature type="domain" description="Mononegavirus-type SAM-dependent 2'-O-MTase" evidence="5">
    <location>
        <begin position="1674"/>
        <end position="1871"/>
    </location>
</feature>
<feature type="region of interest" description="Disordered" evidence="6">
    <location>
        <begin position="1"/>
        <end position="27"/>
    </location>
</feature>
<feature type="region of interest" description="Interaction with P protein" evidence="1">
    <location>
        <begin position="1562"/>
        <end position="2127"/>
    </location>
</feature>
<feature type="compositionally biased region" description="Acidic residues" evidence="6">
    <location>
        <begin position="1"/>
        <end position="18"/>
    </location>
</feature>
<feature type="sequence variant" description="In strain: Isolate Germany.">
    <original>T</original>
    <variation>A</variation>
    <location>
        <position position="93"/>
    </location>
</feature>
<feature type="sequence variant" description="In strain: Isolate Germany.">
    <original>H</original>
    <variation>Q</variation>
    <location>
        <position position="232"/>
    </location>
</feature>
<feature type="sequence variant" description="In strain: Isolate Germany.">
    <original>L</original>
    <variation>V</variation>
    <location>
        <position position="361"/>
    </location>
</feature>
<feature type="sequence variant" description="In strain: Isolate Germany.">
    <original>P</original>
    <variation>S</variation>
    <location>
        <position position="471"/>
    </location>
</feature>
<feature type="sequence variant" description="In strain: Isolate Germany.">
    <original>A</original>
    <variation>T</variation>
    <location>
        <position position="488"/>
    </location>
</feature>
<feature type="sequence variant" description="In strain: Isolate Germany.">
    <original>A</original>
    <variation>V</variation>
    <location>
        <position position="502"/>
    </location>
</feature>
<feature type="sequence variant" description="In strain: Isolate Germany.">
    <original>T</original>
    <variation>S</variation>
    <location>
        <position position="525"/>
    </location>
</feature>
<feature type="sequence variant" description="In strain: Isolate Germany.">
    <original>T</original>
    <variation>A</variation>
    <location>
        <position position="966"/>
    </location>
</feature>
<feature type="sequence variant" description="In strain: Isolate Germany.">
    <original>G</original>
    <variation>D</variation>
    <location>
        <position position="1373"/>
    </location>
</feature>
<feature type="sequence variant" description="In strain: Isolate Germany.">
    <original>Y</original>
    <variation>C</variation>
    <location>
        <position position="1825"/>
    </location>
</feature>
<feature type="sequence variant" description="In strain: Isolate Germany.">
    <original>K</original>
    <variation>N</variation>
    <location>
        <position position="1841"/>
    </location>
</feature>
<feature type="sequence variant" description="In strain: Isolate Germany.">
    <original>H</original>
    <variation>Q</variation>
    <location>
        <position position="1845"/>
    </location>
</feature>
<feature type="sequence variant" description="In strain: Isolate Germany.">
    <original>F</original>
    <variation>C</variation>
    <location>
        <position position="1872"/>
    </location>
</feature>
<feature type="sequence variant" description="In strain: Isolate Germany.">
    <original>R</original>
    <variation>K</variation>
    <location>
        <position position="1904"/>
    </location>
</feature>
<feature type="sequence variant" description="In strain: Isolate Germany.">
    <original>R</original>
    <variation>G</variation>
    <location>
        <position position="1960"/>
    </location>
</feature>
<feature type="sequence variant" description="In strain: Isolate Germany.">
    <original>S</original>
    <variation>N</variation>
    <location>
        <position position="2091"/>
    </location>
</feature>
<name>L_RABVI</name>